<sequence length="136" mass="15958">MAEEPGVWSLLERAPIDWTEPWLIGLAAFHILCFIVTYISFKSYPLQICHFLLMVVLVSCAEYINEFAAMHWRAYSKQQYFDSSGMFISLAFSAPLLCNTIIIVVHWVYKTLCVMTELKTLQQKRKESREKRKKKE</sequence>
<dbReference type="EMBL" id="BC097804">
    <property type="protein sequence ID" value="AAH97804.1"/>
    <property type="molecule type" value="mRNA"/>
</dbReference>
<dbReference type="RefSeq" id="NP_001090050.1">
    <property type="nucleotide sequence ID" value="NM_001096581.1"/>
</dbReference>
<dbReference type="DNASU" id="735124"/>
<dbReference type="GeneID" id="735124"/>
<dbReference type="KEGG" id="xla:735124"/>
<dbReference type="AGR" id="Xenbase:XB-GENE-6254285"/>
<dbReference type="CTD" id="735124"/>
<dbReference type="Xenbase" id="XB-GENE-6254285">
    <property type="gene designation" value="tmem18.L"/>
</dbReference>
<dbReference type="OMA" id="TFSKQQY"/>
<dbReference type="OrthoDB" id="411535at2759"/>
<dbReference type="Proteomes" id="UP000186698">
    <property type="component" value="Chromosome 5L"/>
</dbReference>
<dbReference type="Bgee" id="735124">
    <property type="expression patterns" value="Expressed in oocyte and 19 other cell types or tissues"/>
</dbReference>
<dbReference type="GO" id="GO:0031965">
    <property type="term" value="C:nuclear membrane"/>
    <property type="evidence" value="ECO:0000250"/>
    <property type="project" value="UniProtKB"/>
</dbReference>
<dbReference type="GO" id="GO:0003677">
    <property type="term" value="F:DNA binding"/>
    <property type="evidence" value="ECO:0007669"/>
    <property type="project" value="UniProtKB-KW"/>
</dbReference>
<dbReference type="InterPro" id="IPR026721">
    <property type="entry name" value="TMEM18"/>
</dbReference>
<dbReference type="PANTHER" id="PTHR22593">
    <property type="entry name" value="TRANSMEMBRANE PROTEIN 18"/>
    <property type="match status" value="1"/>
</dbReference>
<dbReference type="PANTHER" id="PTHR22593:SF2">
    <property type="entry name" value="TRANSMEMBRANE PROTEIN 18"/>
    <property type="match status" value="1"/>
</dbReference>
<dbReference type="Pfam" id="PF14770">
    <property type="entry name" value="TMEM18"/>
    <property type="match status" value="1"/>
</dbReference>
<keyword id="KW-0175">Coiled coil</keyword>
<keyword id="KW-0238">DNA-binding</keyword>
<keyword id="KW-0472">Membrane</keyword>
<keyword id="KW-0539">Nucleus</keyword>
<keyword id="KW-1185">Reference proteome</keyword>
<keyword id="KW-0812">Transmembrane</keyword>
<keyword id="KW-1133">Transmembrane helix</keyword>
<reference key="1">
    <citation type="submission" date="2005-06" db="EMBL/GenBank/DDBJ databases">
        <authorList>
            <consortium name="NIH - Xenopus Gene Collection (XGC) project"/>
        </authorList>
    </citation>
    <scope>NUCLEOTIDE SEQUENCE [LARGE SCALE MRNA]</scope>
    <source>
        <tissue>Egg</tissue>
    </source>
</reference>
<comment type="subcellular location">
    <subcellularLocation>
        <location evidence="2">Nucleus membrane</location>
        <topology evidence="3">Multi-pass membrane protein</topology>
    </subcellularLocation>
</comment>
<comment type="similarity">
    <text evidence="4">Belongs to the TMEM18 family.</text>
</comment>
<accession>Q4V7N7</accession>
<gene>
    <name type="primary">tmem18</name>
</gene>
<evidence type="ECO:0000250" key="1"/>
<evidence type="ECO:0000250" key="2">
    <source>
        <dbReference type="UniProtKB" id="Q96B42"/>
    </source>
</evidence>
<evidence type="ECO:0000255" key="3"/>
<evidence type="ECO:0000305" key="4"/>
<organism>
    <name type="scientific">Xenopus laevis</name>
    <name type="common">African clawed frog</name>
    <dbReference type="NCBI Taxonomy" id="8355"/>
    <lineage>
        <taxon>Eukaryota</taxon>
        <taxon>Metazoa</taxon>
        <taxon>Chordata</taxon>
        <taxon>Craniata</taxon>
        <taxon>Vertebrata</taxon>
        <taxon>Euteleostomi</taxon>
        <taxon>Amphibia</taxon>
        <taxon>Batrachia</taxon>
        <taxon>Anura</taxon>
        <taxon>Pipoidea</taxon>
        <taxon>Pipidae</taxon>
        <taxon>Xenopodinae</taxon>
        <taxon>Xenopus</taxon>
        <taxon>Xenopus</taxon>
    </lineage>
</organism>
<protein>
    <recommendedName>
        <fullName>Transmembrane protein 18</fullName>
    </recommendedName>
</protein>
<proteinExistence type="evidence at transcript level"/>
<feature type="chain" id="PRO_0000284374" description="Transmembrane protein 18">
    <location>
        <begin position="1"/>
        <end position="136"/>
    </location>
</feature>
<feature type="topological domain" description="Perinuclear space" evidence="3">
    <location>
        <begin position="1"/>
        <end position="20"/>
    </location>
</feature>
<feature type="transmembrane region" description="Helical" evidence="3">
    <location>
        <begin position="21"/>
        <end position="41"/>
    </location>
</feature>
<feature type="topological domain" description="Nuclear" evidence="3">
    <location>
        <begin position="42"/>
        <end position="43"/>
    </location>
</feature>
<feature type="transmembrane region" description="Helical" evidence="3">
    <location>
        <begin position="44"/>
        <end position="64"/>
    </location>
</feature>
<feature type="topological domain" description="Perinuclear space" evidence="3">
    <location>
        <begin position="65"/>
        <end position="84"/>
    </location>
</feature>
<feature type="transmembrane region" description="Helical" evidence="3">
    <location>
        <begin position="85"/>
        <end position="105"/>
    </location>
</feature>
<feature type="topological domain" description="Nuclear" evidence="3">
    <location>
        <position position="106"/>
    </location>
</feature>
<feature type="region of interest" description="DNA-binding" evidence="1">
    <location>
        <position position="106"/>
    </location>
</feature>
<feature type="coiled-coil region" evidence="3">
    <location>
        <begin position="112"/>
        <end position="136"/>
    </location>
</feature>
<name>TMM18_XENLA</name>